<protein>
    <recommendedName>
        <fullName evidence="1">Peptide chain release factor 1</fullName>
        <shortName evidence="1">RF-1</shortName>
    </recommendedName>
</protein>
<feature type="chain" id="PRO_1000004959" description="Peptide chain release factor 1">
    <location>
        <begin position="1"/>
        <end position="359"/>
    </location>
</feature>
<feature type="region of interest" description="Disordered" evidence="2">
    <location>
        <begin position="288"/>
        <end position="307"/>
    </location>
</feature>
<feature type="compositionally biased region" description="Basic and acidic residues" evidence="2">
    <location>
        <begin position="293"/>
        <end position="307"/>
    </location>
</feature>
<feature type="modified residue" description="N5-methylglutamine" evidence="1">
    <location>
        <position position="236"/>
    </location>
</feature>
<proteinExistence type="inferred from homology"/>
<evidence type="ECO:0000255" key="1">
    <source>
        <dbReference type="HAMAP-Rule" id="MF_00093"/>
    </source>
</evidence>
<evidence type="ECO:0000256" key="2">
    <source>
        <dbReference type="SAM" id="MobiDB-lite"/>
    </source>
</evidence>
<organism>
    <name type="scientific">Streptococcus sanguinis (strain SK36)</name>
    <dbReference type="NCBI Taxonomy" id="388919"/>
    <lineage>
        <taxon>Bacteria</taxon>
        <taxon>Bacillati</taxon>
        <taxon>Bacillota</taxon>
        <taxon>Bacilli</taxon>
        <taxon>Lactobacillales</taxon>
        <taxon>Streptococcaceae</taxon>
        <taxon>Streptococcus</taxon>
    </lineage>
</organism>
<name>RF1_STRSV</name>
<accession>A3CN05</accession>
<dbReference type="EMBL" id="CP000387">
    <property type="protein sequence ID" value="ABN44560.1"/>
    <property type="molecule type" value="Genomic_DNA"/>
</dbReference>
<dbReference type="RefSeq" id="WP_002897584.1">
    <property type="nucleotide sequence ID" value="NC_009009.1"/>
</dbReference>
<dbReference type="RefSeq" id="YP_001035110.1">
    <property type="nucleotide sequence ID" value="NC_009009.1"/>
</dbReference>
<dbReference type="SMR" id="A3CN05"/>
<dbReference type="STRING" id="388919.SSA_1152"/>
<dbReference type="KEGG" id="ssa:SSA_1152"/>
<dbReference type="PATRIC" id="fig|388919.9.peg.1096"/>
<dbReference type="eggNOG" id="COG0216">
    <property type="taxonomic scope" value="Bacteria"/>
</dbReference>
<dbReference type="HOGENOM" id="CLU_036856_0_1_9"/>
<dbReference type="OrthoDB" id="9806673at2"/>
<dbReference type="Proteomes" id="UP000002148">
    <property type="component" value="Chromosome"/>
</dbReference>
<dbReference type="GO" id="GO:0005737">
    <property type="term" value="C:cytoplasm"/>
    <property type="evidence" value="ECO:0007669"/>
    <property type="project" value="UniProtKB-SubCell"/>
</dbReference>
<dbReference type="GO" id="GO:0016149">
    <property type="term" value="F:translation release factor activity, codon specific"/>
    <property type="evidence" value="ECO:0007669"/>
    <property type="project" value="UniProtKB-UniRule"/>
</dbReference>
<dbReference type="FunFam" id="3.30.160.20:FF:000027">
    <property type="entry name" value="Peptide chain release factor 1"/>
    <property type="match status" value="1"/>
</dbReference>
<dbReference type="FunFam" id="3.30.70.1660:FF:000002">
    <property type="entry name" value="Peptide chain release factor 1"/>
    <property type="match status" value="1"/>
</dbReference>
<dbReference type="FunFam" id="3.30.70.1660:FF:000004">
    <property type="entry name" value="Peptide chain release factor 1"/>
    <property type="match status" value="1"/>
</dbReference>
<dbReference type="Gene3D" id="3.30.160.20">
    <property type="match status" value="1"/>
</dbReference>
<dbReference type="Gene3D" id="3.30.70.1660">
    <property type="match status" value="2"/>
</dbReference>
<dbReference type="Gene3D" id="6.10.140.1950">
    <property type="match status" value="1"/>
</dbReference>
<dbReference type="HAMAP" id="MF_00093">
    <property type="entry name" value="Rel_fac_1"/>
    <property type="match status" value="1"/>
</dbReference>
<dbReference type="InterPro" id="IPR005139">
    <property type="entry name" value="PCRF"/>
</dbReference>
<dbReference type="InterPro" id="IPR000352">
    <property type="entry name" value="Pep_chain_release_fac_I"/>
</dbReference>
<dbReference type="InterPro" id="IPR045853">
    <property type="entry name" value="Pep_chain_release_fac_I_sf"/>
</dbReference>
<dbReference type="InterPro" id="IPR050057">
    <property type="entry name" value="Prokaryotic/Mito_RF"/>
</dbReference>
<dbReference type="InterPro" id="IPR004373">
    <property type="entry name" value="RF-1"/>
</dbReference>
<dbReference type="NCBIfam" id="TIGR00019">
    <property type="entry name" value="prfA"/>
    <property type="match status" value="1"/>
</dbReference>
<dbReference type="NCBIfam" id="NF001859">
    <property type="entry name" value="PRK00591.1"/>
    <property type="match status" value="1"/>
</dbReference>
<dbReference type="PANTHER" id="PTHR43804">
    <property type="entry name" value="LD18447P"/>
    <property type="match status" value="1"/>
</dbReference>
<dbReference type="PANTHER" id="PTHR43804:SF7">
    <property type="entry name" value="LD18447P"/>
    <property type="match status" value="1"/>
</dbReference>
<dbReference type="Pfam" id="PF03462">
    <property type="entry name" value="PCRF"/>
    <property type="match status" value="1"/>
</dbReference>
<dbReference type="Pfam" id="PF00472">
    <property type="entry name" value="RF-1"/>
    <property type="match status" value="1"/>
</dbReference>
<dbReference type="SMART" id="SM00937">
    <property type="entry name" value="PCRF"/>
    <property type="match status" value="1"/>
</dbReference>
<dbReference type="SUPFAM" id="SSF75620">
    <property type="entry name" value="Release factor"/>
    <property type="match status" value="1"/>
</dbReference>
<dbReference type="PROSITE" id="PS00745">
    <property type="entry name" value="RF_PROK_I"/>
    <property type="match status" value="1"/>
</dbReference>
<gene>
    <name evidence="1" type="primary">prfA</name>
    <name type="ordered locus">SSA_1152</name>
</gene>
<sequence>MNIYEQLQAVEDRYEELGELLSDPDVVSDTKRFMDLSKEEASTRDTVTAYREYKKVLQNITDAEEMIKDASGDADLEEMAKQELKDAKAEKEEYEEKLKILLLPKDPNDDKNIILEIRGAAGGDEAQLFAGDLLQMYQKYAESQGWRFEVMEASYNGVGGIKEVVAMVSGQSVYSKLKYESGAHRVQRVPVTESQGRVHTSTATVLVMPEIEEVEYDIDPKDLRVDIYHASGAGGQNVNKVATAVRIVHLPTNIKVEMQEERTQQKNRDKAMKIIRARVADHFAQIAQDEQDAERKSTIGTGDRSERIRTYNFPQNRVTDHRIGLTLQKLDTILAGKLDEVVDALVLYDQTQKLEELNK</sequence>
<comment type="function">
    <text evidence="1">Peptide chain release factor 1 directs the termination of translation in response to the peptide chain termination codons UAG and UAA.</text>
</comment>
<comment type="subcellular location">
    <subcellularLocation>
        <location evidence="1">Cytoplasm</location>
    </subcellularLocation>
</comment>
<comment type="PTM">
    <text evidence="1">Methylated by PrmC. Methylation increases the termination efficiency of RF1.</text>
</comment>
<comment type="similarity">
    <text evidence="1">Belongs to the prokaryotic/mitochondrial release factor family.</text>
</comment>
<keyword id="KW-0963">Cytoplasm</keyword>
<keyword id="KW-0488">Methylation</keyword>
<keyword id="KW-0648">Protein biosynthesis</keyword>
<keyword id="KW-1185">Reference proteome</keyword>
<reference key="1">
    <citation type="journal article" date="2007" name="J. Bacteriol.">
        <title>Genome of the opportunistic pathogen Streptococcus sanguinis.</title>
        <authorList>
            <person name="Xu P."/>
            <person name="Alves J.M."/>
            <person name="Kitten T."/>
            <person name="Brown A."/>
            <person name="Chen Z."/>
            <person name="Ozaki L.S."/>
            <person name="Manque P."/>
            <person name="Ge X."/>
            <person name="Serrano M.G."/>
            <person name="Puiu D."/>
            <person name="Hendricks S."/>
            <person name="Wang Y."/>
            <person name="Chaplin M.D."/>
            <person name="Akan D."/>
            <person name="Paik S."/>
            <person name="Peterson D.L."/>
            <person name="Macrina F.L."/>
            <person name="Buck G.A."/>
        </authorList>
    </citation>
    <scope>NUCLEOTIDE SEQUENCE [LARGE SCALE GENOMIC DNA]</scope>
    <source>
        <strain>SK36</strain>
    </source>
</reference>